<reference key="1">
    <citation type="journal article" date="1990" name="J. Exp. Med.">
        <title>Human leukocyte antigen F (HLA-F). An expressed HLA gene composed of a class I coding sequence linked to a novel transcribed repetitive element.</title>
        <authorList>
            <person name="Geraghty D.E."/>
            <person name="Wei X."/>
            <person name="Orr H.T."/>
            <person name="Koller B.H."/>
        </authorList>
    </citation>
    <scope>NUCLEOTIDE SEQUENCE [GENOMIC DNA]</scope>
    <scope>ALTERNATIVE SPLICING (ISOFORM 1)</scope>
    <scope>VARIANT SER-272</scope>
</reference>
<reference key="2">
    <citation type="journal article" date="1990" name="Int. Immunol.">
        <title>The human class I MHC gene HLA-F is expressed in lymphocytes.</title>
        <authorList>
            <person name="Lury D."/>
            <person name="Epstein H."/>
            <person name="Holmes N."/>
        </authorList>
    </citation>
    <scope>NUCLEOTIDE SEQUENCE [GENOMIC DNA]</scope>
    <scope>ALTERNATIVE SPLICING (ISOFORM 1)</scope>
    <scope>VARIANT SER-272</scope>
</reference>
<reference key="3">
    <citation type="journal article" date="1999" name="DNA Seq.">
        <title>A 356-Kb sequence of the subtelomeric part of the MHC class I region.</title>
        <authorList>
            <person name="Hampe A."/>
            <person name="Coriton O."/>
            <person name="Andrieux N."/>
            <person name="Carn G."/>
            <person name="Lepourcelet M."/>
            <person name="Mottier S."/>
            <person name="Dreano S."/>
            <person name="Gatius M.T."/>
            <person name="Hitte C."/>
            <person name="Soriano N."/>
            <person name="Galibert F."/>
        </authorList>
    </citation>
    <scope>NUCLEOTIDE SEQUENCE [GENOMIC DNA]</scope>
    <scope>ALTERNATIVE SPLICING (ISOFORM 1)</scope>
    <scope>VARIANT SER-272</scope>
</reference>
<reference key="4">
    <citation type="journal article" date="2004" name="Tissue Antigens">
        <title>Identification of a novel HLA-F allele - HLA-F*010102.</title>
        <authorList>
            <person name="He X."/>
            <person name="Xu L."/>
            <person name="Liu Y."/>
            <person name="Zeng Y."/>
        </authorList>
    </citation>
    <scope>NUCLEOTIDE SEQUENCE [MRNA] (ISOFORMS 1 AND 2)</scope>
    <scope>VARIANT SER-272</scope>
</reference>
<reference key="5">
    <citation type="journal article" date="2006" name="Immunogenetics">
        <title>HLA-E, HLA-F, and HLA-G polymorphism: genomic sequence defines haplotype structure and variation spanning the nonclassical class I genes.</title>
        <authorList>
            <person name="Pyo C.W."/>
            <person name="Williams L.M."/>
            <person name="Moore Y."/>
            <person name="Hyodo H."/>
            <person name="Li S.S."/>
            <person name="Zhao L.P."/>
            <person name="Sageshima N."/>
            <person name="Ishitani A."/>
            <person name="Geraghty D.E."/>
        </authorList>
    </citation>
    <scope>NUCLEOTIDE SEQUENCE [GENOMIC DNA]</scope>
    <scope>ALTERNATIVE SPLICING (ISOFORM 1)</scope>
    <scope>VARIANT SER-272</scope>
</reference>
<reference key="6">
    <citation type="submission" date="2006-01" db="EMBL/GenBank/DDBJ databases">
        <title>A comparative study of the MHC-F expression patterns between humans and nonhuman primates.</title>
        <authorList>
            <person name="Gharwan H."/>
            <person name="Sageshima N."/>
            <person name="Ishitani A."/>
            <person name="Geraghty D.E."/>
        </authorList>
    </citation>
    <scope>NUCLEOTIDE SEQUENCE [MRNA] (ISOFORM 1)</scope>
    <scope>VARIANT SER-272</scope>
</reference>
<reference key="7">
    <citation type="submission" date="1999-09" db="EMBL/GenBank/DDBJ databases">
        <title>Homo sapiens 2,229,817bp genomic DNA of 6p21.3 HLA class I region.</title>
        <authorList>
            <person name="Shiina S."/>
            <person name="Tamiya G."/>
            <person name="Oka A."/>
            <person name="Inoko H."/>
        </authorList>
    </citation>
    <scope>NUCLEOTIDE SEQUENCE [LARGE SCALE GENOMIC DNA]</scope>
    <scope>VARIANT SER-272</scope>
</reference>
<reference key="8">
    <citation type="journal article" date="2003" name="Nature">
        <title>The DNA sequence and analysis of human chromosome 6.</title>
        <authorList>
            <person name="Mungall A.J."/>
            <person name="Palmer S.A."/>
            <person name="Sims S.K."/>
            <person name="Edwards C.A."/>
            <person name="Ashurst J.L."/>
            <person name="Wilming L."/>
            <person name="Jones M.C."/>
            <person name="Horton R."/>
            <person name="Hunt S.E."/>
            <person name="Scott C.E."/>
            <person name="Gilbert J.G.R."/>
            <person name="Clamp M.E."/>
            <person name="Bethel G."/>
            <person name="Milne S."/>
            <person name="Ainscough R."/>
            <person name="Almeida J.P."/>
            <person name="Ambrose K.D."/>
            <person name="Andrews T.D."/>
            <person name="Ashwell R.I.S."/>
            <person name="Babbage A.K."/>
            <person name="Bagguley C.L."/>
            <person name="Bailey J."/>
            <person name="Banerjee R."/>
            <person name="Barker D.J."/>
            <person name="Barlow K.F."/>
            <person name="Bates K."/>
            <person name="Beare D.M."/>
            <person name="Beasley H."/>
            <person name="Beasley O."/>
            <person name="Bird C.P."/>
            <person name="Blakey S.E."/>
            <person name="Bray-Allen S."/>
            <person name="Brook J."/>
            <person name="Brown A.J."/>
            <person name="Brown J.Y."/>
            <person name="Burford D.C."/>
            <person name="Burrill W."/>
            <person name="Burton J."/>
            <person name="Carder C."/>
            <person name="Carter N.P."/>
            <person name="Chapman J.C."/>
            <person name="Clark S.Y."/>
            <person name="Clark G."/>
            <person name="Clee C.M."/>
            <person name="Clegg S."/>
            <person name="Cobley V."/>
            <person name="Collier R.E."/>
            <person name="Collins J.E."/>
            <person name="Colman L.K."/>
            <person name="Corby N.R."/>
            <person name="Coville G.J."/>
            <person name="Culley K.M."/>
            <person name="Dhami P."/>
            <person name="Davies J."/>
            <person name="Dunn M."/>
            <person name="Earthrowl M.E."/>
            <person name="Ellington A.E."/>
            <person name="Evans K.A."/>
            <person name="Faulkner L."/>
            <person name="Francis M.D."/>
            <person name="Frankish A."/>
            <person name="Frankland J."/>
            <person name="French L."/>
            <person name="Garner P."/>
            <person name="Garnett J."/>
            <person name="Ghori M.J."/>
            <person name="Gilby L.M."/>
            <person name="Gillson C.J."/>
            <person name="Glithero R.J."/>
            <person name="Grafham D.V."/>
            <person name="Grant M."/>
            <person name="Gribble S."/>
            <person name="Griffiths C."/>
            <person name="Griffiths M.N.D."/>
            <person name="Hall R."/>
            <person name="Halls K.S."/>
            <person name="Hammond S."/>
            <person name="Harley J.L."/>
            <person name="Hart E.A."/>
            <person name="Heath P.D."/>
            <person name="Heathcott R."/>
            <person name="Holmes S.J."/>
            <person name="Howden P.J."/>
            <person name="Howe K.L."/>
            <person name="Howell G.R."/>
            <person name="Huckle E."/>
            <person name="Humphray S.J."/>
            <person name="Humphries M.D."/>
            <person name="Hunt A.R."/>
            <person name="Johnson C.M."/>
            <person name="Joy A.A."/>
            <person name="Kay M."/>
            <person name="Keenan S.J."/>
            <person name="Kimberley A.M."/>
            <person name="King A."/>
            <person name="Laird G.K."/>
            <person name="Langford C."/>
            <person name="Lawlor S."/>
            <person name="Leongamornlert D.A."/>
            <person name="Leversha M."/>
            <person name="Lloyd C.R."/>
            <person name="Lloyd D.M."/>
            <person name="Loveland J.E."/>
            <person name="Lovell J."/>
            <person name="Martin S."/>
            <person name="Mashreghi-Mohammadi M."/>
            <person name="Maslen G.L."/>
            <person name="Matthews L."/>
            <person name="McCann O.T."/>
            <person name="McLaren S.J."/>
            <person name="McLay K."/>
            <person name="McMurray A."/>
            <person name="Moore M.J.F."/>
            <person name="Mullikin J.C."/>
            <person name="Niblett D."/>
            <person name="Nickerson T."/>
            <person name="Novik K.L."/>
            <person name="Oliver K."/>
            <person name="Overton-Larty E.K."/>
            <person name="Parker A."/>
            <person name="Patel R."/>
            <person name="Pearce A.V."/>
            <person name="Peck A.I."/>
            <person name="Phillimore B.J.C.T."/>
            <person name="Phillips S."/>
            <person name="Plumb R.W."/>
            <person name="Porter K.M."/>
            <person name="Ramsey Y."/>
            <person name="Ranby S.A."/>
            <person name="Rice C.M."/>
            <person name="Ross M.T."/>
            <person name="Searle S.M."/>
            <person name="Sehra H.K."/>
            <person name="Sheridan E."/>
            <person name="Skuce C.D."/>
            <person name="Smith S."/>
            <person name="Smith M."/>
            <person name="Spraggon L."/>
            <person name="Squares S.L."/>
            <person name="Steward C.A."/>
            <person name="Sycamore N."/>
            <person name="Tamlyn-Hall G."/>
            <person name="Tester J."/>
            <person name="Theaker A.J."/>
            <person name="Thomas D.W."/>
            <person name="Thorpe A."/>
            <person name="Tracey A."/>
            <person name="Tromans A."/>
            <person name="Tubby B."/>
            <person name="Wall M."/>
            <person name="Wallis J.M."/>
            <person name="West A.P."/>
            <person name="White S.S."/>
            <person name="Whitehead S.L."/>
            <person name="Whittaker H."/>
            <person name="Wild A."/>
            <person name="Willey D.J."/>
            <person name="Wilmer T.E."/>
            <person name="Wood J.M."/>
            <person name="Wray P.W."/>
            <person name="Wyatt J.C."/>
            <person name="Young L."/>
            <person name="Younger R.M."/>
            <person name="Bentley D.R."/>
            <person name="Coulson A."/>
            <person name="Durbin R.M."/>
            <person name="Hubbard T."/>
            <person name="Sulston J.E."/>
            <person name="Dunham I."/>
            <person name="Rogers J."/>
            <person name="Beck S."/>
        </authorList>
    </citation>
    <scope>NUCLEOTIDE SEQUENCE [LARGE SCALE GENOMIC DNA]</scope>
    <scope>VARIANT SER-272</scope>
</reference>
<reference key="9">
    <citation type="submission" date="2005-07" db="EMBL/GenBank/DDBJ databases">
        <authorList>
            <person name="Mural R.J."/>
            <person name="Istrail S."/>
            <person name="Sutton G."/>
            <person name="Florea L."/>
            <person name="Halpern A.L."/>
            <person name="Mobarry C.M."/>
            <person name="Lippert R."/>
            <person name="Walenz B."/>
            <person name="Shatkay H."/>
            <person name="Dew I."/>
            <person name="Miller J.R."/>
            <person name="Flanigan M.J."/>
            <person name="Edwards N.J."/>
            <person name="Bolanos R."/>
            <person name="Fasulo D."/>
            <person name="Halldorsson B.V."/>
            <person name="Hannenhalli S."/>
            <person name="Turner R."/>
            <person name="Yooseph S."/>
            <person name="Lu F."/>
            <person name="Nusskern D.R."/>
            <person name="Shue B.C."/>
            <person name="Zheng X.H."/>
            <person name="Zhong F."/>
            <person name="Delcher A.L."/>
            <person name="Huson D.H."/>
            <person name="Kravitz S.A."/>
            <person name="Mouchard L."/>
            <person name="Reinert K."/>
            <person name="Remington K.A."/>
            <person name="Clark A.G."/>
            <person name="Waterman M.S."/>
            <person name="Eichler E.E."/>
            <person name="Adams M.D."/>
            <person name="Hunkapiller M.W."/>
            <person name="Myers E.W."/>
            <person name="Venter J.C."/>
        </authorList>
    </citation>
    <scope>NUCLEOTIDE SEQUENCE [LARGE SCALE GENOMIC DNA]</scope>
</reference>
<reference key="10">
    <citation type="journal article" date="2004" name="Genome Res.">
        <title>The status, quality, and expansion of the NIH full-length cDNA project: the Mammalian Gene Collection (MGC).</title>
        <authorList>
            <consortium name="The MGC Project Team"/>
        </authorList>
    </citation>
    <scope>NUCLEOTIDE SEQUENCE [LARGE SCALE MRNA] (ISOFORMS 1 AND 3)</scope>
    <scope>VARIANT SER-272</scope>
    <source>
        <tissue>Lung</tissue>
        <tissue>Lymph</tissue>
    </source>
</reference>
<reference key="11">
    <citation type="journal article" date="2000" name="Eur. J. Immunol.">
        <title>Functional characterization of HLA-F and binding of HLA-F tetramers to ILT2 and ILT4 receptors.</title>
        <authorList>
            <person name="Lepin E.J."/>
            <person name="Bastin J.M."/>
            <person name="Allan D.S."/>
            <person name="Roncador G."/>
            <person name="Braud V.M."/>
            <person name="Mason D.Y."/>
            <person name="van der Merwe P.A."/>
            <person name="McMichael A.J."/>
            <person name="Bell J.I."/>
            <person name="Powis S.H."/>
            <person name="O'Callaghan C.A."/>
        </authorList>
    </citation>
    <scope>SUBUNIT</scope>
    <scope>INTERACTION WITH LILRB1 AND LILRB2</scope>
    <scope>TISSUE SPECIFICITY</scope>
</reference>
<reference key="12">
    <citation type="journal article" date="2000" name="J. Immunol.">
        <title>HLA-F is a predominantly empty, intracellular, TAP-associated MHC class Ib protein with a restricted expression pattern.</title>
        <authorList>
            <person name="Wainwright S.D."/>
            <person name="Biro P.A."/>
            <person name="Holmes C.H."/>
        </authorList>
    </citation>
    <scope>SUBUNIT</scope>
    <scope>TISSUE SPECIFICITY</scope>
    <scope>DEVELOPMENTAL STAGE</scope>
    <scope>GLYCOSYLATION</scope>
    <scope>INTERACTION WITH TAP1</scope>
    <scope>INTERACTION WITH TAP2</scope>
    <scope>INTERACTION WITH CALR</scope>
    <scope>INTERACTION WITH B2M</scope>
</reference>
<reference key="13">
    <citation type="journal article" date="2006" name="J. Immunol.">
        <title>Selective export of HLA-F by its cytoplasmic tail.</title>
        <authorList>
            <person name="Boyle L.H."/>
            <person name="Gillingham A.K."/>
            <person name="Munro S."/>
            <person name="Trowsdale J."/>
        </authorList>
    </citation>
    <scope>SUBCELLULAR LOCATION</scope>
    <scope>MUTAGENESIS OF VAL-346</scope>
    <scope>MUTAGENESIS OF 336-ARG--ARG-338</scope>
    <scope>SUBUNIT</scope>
    <scope>MOTIF</scope>
</reference>
<reference key="14">
    <citation type="journal article" date="2010" name="Eur. J. Immunol.">
        <title>HLA-F is a surface marker on activated lymphocytes.</title>
        <authorList>
            <person name="Lee N."/>
            <person name="Ishitani A."/>
            <person name="Geraghty D.E."/>
        </authorList>
    </citation>
    <scope>TISSUE SPECIFICITY</scope>
</reference>
<reference key="15">
    <citation type="journal article" date="2010" name="J. Immunol.">
        <title>HLA-F complex without peptide binds to MHC class I protein in the open conformer form.</title>
        <authorList>
            <person name="Goodridge J.P."/>
            <person name="Burian A."/>
            <person name="Lee N."/>
            <person name="Geraghty D.E."/>
        </authorList>
    </citation>
    <scope>SUBUNIT</scope>
    <scope>INTERACTION WITH HLA-E</scope>
</reference>
<reference key="16">
    <citation type="journal article" date="2013" name="J. Immunol.">
        <title>HLA-F and MHC-I open conformers cooperate in a MHC-I antigen cross-presentation pathway.</title>
        <authorList>
            <person name="Goodridge J.P."/>
            <person name="Lee N."/>
            <person name="Burian A."/>
            <person name="Pyo C.W."/>
            <person name="Tykodi S.S."/>
            <person name="Warren E.H."/>
            <person name="Yee C."/>
            <person name="Riddell S.R."/>
            <person name="Geraghty D.E."/>
        </authorList>
    </citation>
    <scope>FUNCTION</scope>
    <scope>SUBCELLULAR LOCATION</scope>
</reference>
<reference key="17">
    <citation type="journal article" date="2013" name="J. Immunol.">
        <title>HLA-F and MHC class I open conformers are ligands for NK cell Ig-like receptors.</title>
        <authorList>
            <person name="Goodridge J.P."/>
            <person name="Burian A."/>
            <person name="Lee N."/>
            <person name="Geraghty D.E."/>
        </authorList>
    </citation>
    <scope>FUNCTION</scope>
    <scope>SUBUNIT</scope>
    <scope>INTERACTION WITH KIR3DL2</scope>
    <scope>INTERACTION WITH KIR2DS4</scope>
</reference>
<reference key="18">
    <citation type="journal article" date="2016" name="Nat. Immunol.">
        <title>Open conformers of HLA-F are high-affinity ligands of the activating NK-cell receptor KIR3DS1.</title>
        <authorList>
            <person name="Garcia-Beltran W.F."/>
            <person name="Hoelzemer A."/>
            <person name="Martrus G."/>
            <person name="Chung A.W."/>
            <person name="Pacheco Y."/>
            <person name="Simoneau C.R."/>
            <person name="Rucevic M."/>
            <person name="Lamothe-Molina P.A."/>
            <person name="Pertel T."/>
            <person name="Kim T.E."/>
            <person name="Dugan H."/>
            <person name="Alter G."/>
            <person name="Dechanet-Merville J."/>
            <person name="Jost S."/>
            <person name="Carrington M."/>
            <person name="Altfeld M."/>
        </authorList>
    </citation>
    <scope>FUNCTION</scope>
    <scope>SUBUNIT</scope>
    <scope>INTERACTION WITH KIR3DS1</scope>
    <scope>TISSUE SPECIFICITY</scope>
    <scope>INDUCTION BY HIV-1 INFECTION</scope>
    <scope>GLYCOSYLATION</scope>
    <scope>SUBCELLULAR LOCATION</scope>
</reference>
<reference key="19">
    <citation type="journal article" date="2016" name="Nat. Med.">
        <title>Major histocompatibility complex class I molecules protect motor neurons from astrocyte-induced toxicity in amyotrophic lateral sclerosis.</title>
        <authorList>
            <person name="Song S."/>
            <person name="Miranda C.J."/>
            <person name="Braun L."/>
            <person name="Meyer K."/>
            <person name="Frakes A.E."/>
            <person name="Ferraiuolo L."/>
            <person name="Likhite S."/>
            <person name="Bevan A.K."/>
            <person name="Foust K.D."/>
            <person name="McConnell M.J."/>
            <person name="Walker C.M."/>
            <person name="Kaspar B.K."/>
        </authorList>
    </citation>
    <scope>FUNCTION</scope>
    <scope>TISSUE SPECIFICITY</scope>
</reference>
<reference key="20">
    <citation type="journal article" date="2017" name="Am. J. Reprod. Immunol.">
        <title>Definitive class I human leukocyte antigen expression in gestational placentation: HLA-F, HLA-E, HLA-C, and HLA-G in extravillous trophoblast invasion on placentation, pregnancy, and parturition.</title>
        <authorList>
            <person name="Hackmon R."/>
            <person name="Pinnaduwage L."/>
            <person name="Zhang J."/>
            <person name="Lye S.J."/>
            <person name="Geraghty D.E."/>
            <person name="Dunk C.E."/>
        </authorList>
    </citation>
    <scope>DEVELOPMENTAL STAGE</scope>
</reference>
<reference key="21">
    <citation type="journal article" date="2017" name="Immunity">
        <title>Human Leukocyte Antigen F Presents Peptides and Regulates Immunity through Interactions with NK Cell Receptors.</title>
        <authorList>
            <person name="Dulberger C.L."/>
            <person name="McMurtrey C.P."/>
            <person name="Holzemer A."/>
            <person name="Neu K.E."/>
            <person name="Liu V."/>
            <person name="Steinbach A.M."/>
            <person name="Garcia-Beltran W.F."/>
            <person name="Sulak M."/>
            <person name="Jabri B."/>
            <person name="Lynch V.J."/>
            <person name="Altfeld M."/>
            <person name="Hildebrand W.H."/>
            <person name="Adams E.J."/>
        </authorList>
    </citation>
    <scope>X-RAY CRYSTALLOGRAPHY (2.62 ANGSTROMS) OF 22-305 IN COMPLEX WITH SELF-PEPTIDE</scope>
    <scope>DISULFIDE BOND</scope>
    <scope>FUNCTION</scope>
    <scope>SUBUNIT</scope>
    <scope>INTERACTION WITH LILRB1</scope>
    <scope>INTERACTION WITH KIR3DS1 AND KIR3DL2</scope>
    <scope>MUTAGENESIS OF TRP-83</scope>
</reference>
<feature type="signal peptide" evidence="2">
    <location>
        <begin position="1"/>
        <end position="21"/>
    </location>
</feature>
<feature type="chain" id="PRO_0000018884" description="HLA class I histocompatibility antigen, alpha chain F">
    <location>
        <begin position="22"/>
        <end position="346"/>
    </location>
</feature>
<feature type="topological domain" description="Extracellular" evidence="2">
    <location>
        <begin position="22"/>
        <end position="305"/>
    </location>
</feature>
<feature type="transmembrane region" description="Helical" evidence="2">
    <location>
        <begin position="306"/>
        <end position="329"/>
    </location>
</feature>
<feature type="topological domain" description="Cytoplasmic" evidence="2">
    <location>
        <begin position="330"/>
        <end position="346"/>
    </location>
</feature>
<feature type="domain" description="Ig-like C1-type" evidence="2">
    <location>
        <begin position="206"/>
        <end position="296"/>
    </location>
</feature>
<feature type="region of interest" description="Alpha-1">
    <location>
        <begin position="22"/>
        <end position="111"/>
    </location>
</feature>
<feature type="region of interest" description="Alpha-2">
    <location>
        <begin position="112"/>
        <end position="203"/>
    </location>
</feature>
<feature type="region of interest" description="Alpha-3">
    <location>
        <begin position="204"/>
        <end position="295"/>
    </location>
</feature>
<feature type="region of interest" description="Connecting peptide">
    <location>
        <begin position="296"/>
        <end position="305"/>
    </location>
</feature>
<feature type="short sequence motif" description="Sorting signal sequence; Golgi-retention signal; ER-retention signal" evidence="11">
    <location>
        <begin position="336"/>
        <end position="338"/>
    </location>
</feature>
<feature type="binding site" evidence="21">
    <location>
        <position position="91"/>
    </location>
    <ligand>
        <name>a peptide antigen</name>
        <dbReference type="ChEBI" id="CHEBI:166823"/>
        <note>self-peptide antigen</note>
    </ligand>
</feature>
<feature type="binding site" evidence="21">
    <location>
        <position position="105"/>
    </location>
    <ligand>
        <name>a peptide antigen</name>
        <dbReference type="ChEBI" id="CHEBI:166823"/>
        <note>self-peptide antigen</note>
    </ligand>
</feature>
<feature type="binding site" evidence="21">
    <location>
        <position position="164"/>
    </location>
    <ligand>
        <name>a peptide antigen</name>
        <dbReference type="ChEBI" id="CHEBI:166823"/>
        <note>self-peptide antigen</note>
    </ligand>
</feature>
<feature type="binding site" evidence="21">
    <location>
        <position position="168"/>
    </location>
    <ligand>
        <name>a peptide antigen</name>
        <dbReference type="ChEBI" id="CHEBI:166823"/>
        <note>self-peptide antigen</note>
    </ligand>
</feature>
<feature type="binding site" evidence="21">
    <location>
        <position position="176"/>
    </location>
    <ligand>
        <name>a peptide antigen</name>
        <dbReference type="ChEBI" id="CHEBI:166823"/>
        <note>self-peptide antigen</note>
    </ligand>
</feature>
<feature type="glycosylation site" description="N-linked (GlcNAc...) asparagine" evidence="1">
    <location>
        <position position="107"/>
    </location>
</feature>
<feature type="disulfide bond" evidence="3 21">
    <location>
        <begin position="122"/>
        <end position="185"/>
    </location>
</feature>
<feature type="disulfide bond" evidence="3 21">
    <location>
        <begin position="224"/>
        <end position="280"/>
    </location>
</feature>
<feature type="splice variant" id="VSP_038846" description="In isoform 2." evidence="24">
    <location>
        <begin position="204"/>
        <end position="295"/>
    </location>
</feature>
<feature type="splice variant" id="VSP_040349" description="In isoform 3." evidence="25">
    <original>V</original>
    <variation>AYSVVSGNLMITWWSSLFLLGVLFQGYLGCLRSHSVLGRRKVGDMWILFFLWLWTSFNTAFLALQSLRFGFGFRRGRSFLLRSWHHLMKRVQIKIFD</variation>
    <location>
        <position position="346"/>
    </location>
</feature>
<feature type="sequence variant" id="VAR_056525" description="In dbSNP:rs17875379.">
    <original>A</original>
    <variation>V</variation>
    <location>
        <position position="13"/>
    </location>
</feature>
<feature type="sequence variant" id="VAR_056526" description="In dbSNP:rs17875380.">
    <original>P</original>
    <variation>Q</variation>
    <location>
        <position position="71"/>
    </location>
</feature>
<feature type="sequence variant" id="VAR_018327" description="In dbSNP:rs1736924." evidence="5 7 8 9 10 12 13 22 23">
    <original>P</original>
    <variation>S</variation>
    <location>
        <position position="272"/>
    </location>
</feature>
<feature type="mutagenesis site" description="Impairs peptide binding." evidence="21">
    <original>W</original>
    <variation>R</variation>
    <location>
        <position position="83"/>
    </location>
</feature>
<feature type="mutagenesis site" description="Impairs the interaction with 14-3-3 proteins." evidence="11">
    <original>RNR</original>
    <variation>AAA</variation>
    <location>
        <begin position="336"/>
        <end position="338"/>
    </location>
</feature>
<feature type="mutagenesis site" description="Impairs the anterograde ER-to-Golgi transport." evidence="11">
    <original>RNR</original>
    <variation>GKG</variation>
    <location>
        <begin position="336"/>
        <end position="338"/>
    </location>
</feature>
<feature type="mutagenesis site" description="Impairs the anterograde ER-to-Golgi transport." evidence="11">
    <original>V</original>
    <variation>S</variation>
    <location>
        <position position="346"/>
    </location>
</feature>
<feature type="mutagenesis site" description="Impairs the interaction with coat protein complex II; impairs the anterograde ER-to-Golgi transport." evidence="11">
    <location>
        <position position="346"/>
    </location>
</feature>
<feature type="strand" evidence="31">
    <location>
        <begin position="24"/>
        <end position="35"/>
    </location>
</feature>
<feature type="turn" evidence="31">
    <location>
        <begin position="36"/>
        <end position="38"/>
    </location>
</feature>
<feature type="strand" evidence="31">
    <location>
        <begin position="39"/>
        <end position="49"/>
    </location>
</feature>
<feature type="strand" evidence="31">
    <location>
        <begin position="52"/>
        <end position="58"/>
    </location>
</feature>
<feature type="strand" evidence="31">
    <location>
        <begin position="61"/>
        <end position="63"/>
    </location>
</feature>
<feature type="strand" evidence="31">
    <location>
        <begin position="67"/>
        <end position="70"/>
    </location>
</feature>
<feature type="helix" evidence="31">
    <location>
        <begin position="71"/>
        <end position="73"/>
    </location>
</feature>
<feature type="helix" evidence="31">
    <location>
        <begin position="78"/>
        <end position="105"/>
    </location>
</feature>
<feature type="strand" evidence="31">
    <location>
        <begin position="115"/>
        <end position="124"/>
    </location>
</feature>
<feature type="strand" evidence="31">
    <location>
        <begin position="128"/>
        <end position="139"/>
    </location>
</feature>
<feature type="strand" evidence="31">
    <location>
        <begin position="142"/>
        <end position="147"/>
    </location>
</feature>
<feature type="strand" evidence="31">
    <location>
        <begin position="154"/>
        <end position="158"/>
    </location>
</feature>
<feature type="helix" evidence="31">
    <location>
        <begin position="161"/>
        <end position="170"/>
    </location>
</feature>
<feature type="helix" evidence="31">
    <location>
        <begin position="173"/>
        <end position="182"/>
    </location>
</feature>
<feature type="helix" evidence="31">
    <location>
        <begin position="184"/>
        <end position="195"/>
    </location>
</feature>
<feature type="helix" evidence="31">
    <location>
        <begin position="197"/>
        <end position="200"/>
    </location>
</feature>
<feature type="strand" evidence="31">
    <location>
        <begin position="207"/>
        <end position="214"/>
    </location>
</feature>
<feature type="strand" evidence="31">
    <location>
        <begin position="216"/>
        <end position="232"/>
    </location>
</feature>
<feature type="strand" evidence="31">
    <location>
        <begin position="235"/>
        <end position="240"/>
    </location>
</feature>
<feature type="turn" evidence="32">
    <location>
        <begin position="246"/>
        <end position="248"/>
    </location>
</feature>
<feature type="strand" evidence="31">
    <location>
        <begin position="249"/>
        <end position="251"/>
    </location>
</feature>
<feature type="strand" evidence="31">
    <location>
        <begin position="258"/>
        <end position="260"/>
    </location>
</feature>
<feature type="strand" evidence="31">
    <location>
        <begin position="262"/>
        <end position="271"/>
    </location>
</feature>
<feature type="helix" evidence="31">
    <location>
        <begin position="275"/>
        <end position="277"/>
    </location>
</feature>
<feature type="strand" evidence="31">
    <location>
        <begin position="278"/>
        <end position="283"/>
    </location>
</feature>
<feature type="strand" evidence="31">
    <location>
        <begin position="287"/>
        <end position="289"/>
    </location>
</feature>
<feature type="strand" evidence="31">
    <location>
        <begin position="291"/>
        <end position="293"/>
    </location>
</feature>
<feature type="sequence conflict" description="In Ref. 10; AAH09260." evidence="28" ref="10">
    <original>N</original>
    <variation>L</variation>
    <location sequence="P30511-3">
        <position position="353"/>
    </location>
</feature>
<gene>
    <name evidence="26 27 30" type="primary">HLA-F</name>
    <name evidence="26 27" type="synonym">HLA-5.4</name>
    <name type="synonym">HLAF</name>
</gene>
<protein>
    <recommendedName>
        <fullName>HLA class I histocompatibility antigen, alpha chain F</fullName>
    </recommendedName>
    <alternativeName>
        <fullName>CDA12</fullName>
    </alternativeName>
    <alternativeName>
        <fullName>HLA F antigen</fullName>
    </alternativeName>
    <alternativeName>
        <fullName evidence="26">Leukocyte antigen F</fullName>
    </alternativeName>
    <alternativeName>
        <fullName>MHC class I antigen F</fullName>
    </alternativeName>
</protein>
<accession>P30511</accession>
<accession>Q5JQI8</accession>
<accession>Q5JQJ1</accession>
<accession>Q5SPT5</accession>
<accession>Q860R0</accession>
<accession>Q8MGQ1</accession>
<accession>Q8WLP5</accession>
<accession>Q95HC0</accession>
<accession>Q9TP68</accession>
<keyword id="KW-0002">3D-structure</keyword>
<keyword id="KW-0025">Alternative splicing</keyword>
<keyword id="KW-1003">Cell membrane</keyword>
<keyword id="KW-1015">Disulfide bond</keyword>
<keyword id="KW-0967">Endosome</keyword>
<keyword id="KW-0325">Glycoprotein</keyword>
<keyword id="KW-0391">Immunity</keyword>
<keyword id="KW-0458">Lysosome</keyword>
<keyword id="KW-0472">Membrane</keyword>
<keyword id="KW-0490">MHC I</keyword>
<keyword id="KW-1267">Proteomics identification</keyword>
<keyword id="KW-1185">Reference proteome</keyword>
<keyword id="KW-0732">Signal</keyword>
<keyword id="KW-0812">Transmembrane</keyword>
<keyword id="KW-1133">Transmembrane helix</keyword>
<organism>
    <name type="scientific">Homo sapiens</name>
    <name type="common">Human</name>
    <dbReference type="NCBI Taxonomy" id="9606"/>
    <lineage>
        <taxon>Eukaryota</taxon>
        <taxon>Metazoa</taxon>
        <taxon>Chordata</taxon>
        <taxon>Craniata</taxon>
        <taxon>Vertebrata</taxon>
        <taxon>Euteleostomi</taxon>
        <taxon>Mammalia</taxon>
        <taxon>Eutheria</taxon>
        <taxon>Euarchontoglires</taxon>
        <taxon>Primates</taxon>
        <taxon>Haplorrhini</taxon>
        <taxon>Catarrhini</taxon>
        <taxon>Hominidae</taxon>
        <taxon>Homo</taxon>
    </lineage>
</organism>
<proteinExistence type="evidence at protein level"/>
<evidence type="ECO:0000250" key="1"/>
<evidence type="ECO:0000255" key="2"/>
<evidence type="ECO:0000255" key="3">
    <source>
        <dbReference type="PROSITE-ProRule" id="PRU00114"/>
    </source>
</evidence>
<evidence type="ECO:0000269" key="4">
    <source>
    </source>
</evidence>
<evidence type="ECO:0000269" key="5">
    <source>
    </source>
</evidence>
<evidence type="ECO:0000269" key="6">
    <source>
    </source>
</evidence>
<evidence type="ECO:0000269" key="7">
    <source>
    </source>
</evidence>
<evidence type="ECO:0000269" key="8">
    <source>
    </source>
</evidence>
<evidence type="ECO:0000269" key="9">
    <source>
    </source>
</evidence>
<evidence type="ECO:0000269" key="10">
    <source>
    </source>
</evidence>
<evidence type="ECO:0000269" key="11">
    <source>
    </source>
</evidence>
<evidence type="ECO:0000269" key="12">
    <source>
    </source>
</evidence>
<evidence type="ECO:0000269" key="13">
    <source>
    </source>
</evidence>
<evidence type="ECO:0000269" key="14">
    <source>
    </source>
</evidence>
<evidence type="ECO:0000269" key="15">
    <source>
    </source>
</evidence>
<evidence type="ECO:0000269" key="16">
    <source>
    </source>
</evidence>
<evidence type="ECO:0000269" key="17">
    <source>
    </source>
</evidence>
<evidence type="ECO:0000269" key="18">
    <source>
    </source>
</evidence>
<evidence type="ECO:0000269" key="19">
    <source>
    </source>
</evidence>
<evidence type="ECO:0000269" key="20">
    <source>
    </source>
</evidence>
<evidence type="ECO:0000269" key="21">
    <source>
    </source>
</evidence>
<evidence type="ECO:0000269" key="22">
    <source ref="6"/>
</evidence>
<evidence type="ECO:0000269" key="23">
    <source ref="7"/>
</evidence>
<evidence type="ECO:0000303" key="24">
    <source>
    </source>
</evidence>
<evidence type="ECO:0000303" key="25">
    <source>
    </source>
</evidence>
<evidence type="ECO:0000303" key="26">
    <source>
    </source>
</evidence>
<evidence type="ECO:0000303" key="27">
    <source>
    </source>
</evidence>
<evidence type="ECO:0000305" key="28"/>
<evidence type="ECO:0000305" key="29">
    <source>
    </source>
</evidence>
<evidence type="ECO:0000312" key="30">
    <source>
        <dbReference type="HGNC" id="HGNC:4963"/>
    </source>
</evidence>
<evidence type="ECO:0007829" key="31">
    <source>
        <dbReference type="PDB" id="5IUE"/>
    </source>
</evidence>
<evidence type="ECO:0007829" key="32">
    <source>
        <dbReference type="PDB" id="5KNM"/>
    </source>
</evidence>
<comment type="function">
    <text evidence="16 17 18 19 21">Non-classical major histocompatibility class Ib molecule postulated to play a role in immune surveillance, immune tolerance and inflammation. Functions in two forms, as a heterotrimeric complex with B2M/beta-2 microglobulin and a peptide (peptide-bound HLA-F-B2M) and as an open conformer (OC) devoid of peptide and B2M (peptide-free OC). In complex with B2M, presents non-canonical self-peptides carrying post-translational modifications, particularly phosphorylated self-peptides. Peptide-bound HLA-F-B2M acts as a ligand for LILRB1 inhibitory receptor, a major player in maternal-fetal tolerance. Peptide-free OC acts as a ligand for KIR3DS1 and KIR3DL2 receptors (PubMed:28636952). Upon interaction with activating KIR3DS1 receptor on NK cells, triggers NK cell degranulation and anti-viral cytokine production (PubMed:27455421). Through interaction with KIR3DL2 receptor, inhibits NK and T cell effector functions (PubMed:24018270). May interact with other MHC class I OCs to cross-present exogenous viral, tumor or minor histompatibility antigens to cytotoxic CD8+ T cells, triggering effector and memory responses (PubMed:23851683). May play a role in inflammatory responses in the peripheral nervous system. Through interaction with KIR3DL2, may protect motor neurons from astrocyte-induced toxicity (PubMed:26928464).</text>
</comment>
<comment type="subunit">
    <text evidence="4 6 11 14 17 19 21">Forms a heterotrimer with B2M and a self-peptide (PubMed:28636952). Binds a diverse number of peptides ranging from 7 to more than 30 amino acids (PubMed:28636952). Peptide-bound HLA-F-B2M interacts with LILRB1 and LILRB2 but not with KIR3DS1 or KIR3DL2; this interaction is direct (PubMed:11169396, PubMed:28636952). The OC form interacts with KIR3DS1, KIR2DS4 and KIR3DL2; this interaction is direct (PubMed:24018270, PubMed:27455421, PubMed:28636952). Interacts with TAP1-TAP2 complex and CALR; this interaction is required for appropriate folding and peptide loading (PubMed:10605026, PubMed:11169396). Interacts with the coat protein complex II and 14-3-3 proteins; these interactions likely control the anterograde ER-to-Golgi transport of HLA-F (PubMed:16709803). HLA-F-B2M complex interacts with the heavy chain of other MHC class I molecules including HLA-A and HLA-E; this interaction may regulate the intracellular trafficking and the stability of peptide-free MHC class I OCs (PubMed:20483783).</text>
</comment>
<comment type="interaction">
    <interactant intactId="EBI-2811134">
        <id>P30511</id>
    </interactant>
    <interactant intactId="EBI-726583">
        <id>P13747</id>
        <label>HLA-E</label>
    </interactant>
    <organismsDiffer>false</organismsDiffer>
    <experiments>4</experiments>
</comment>
<comment type="interaction">
    <interactant intactId="EBI-2811134">
        <id>P30511</id>
    </interactant>
    <interactant intactId="EBI-13916812">
        <id>P43632</id>
        <label>KIR2DS4</label>
    </interactant>
    <organismsDiffer>false</organismsDiffer>
    <experiments>4</experiments>
</comment>
<comment type="interaction">
    <interactant intactId="EBI-2811134">
        <id>P30511</id>
    </interactant>
    <interactant intactId="EBI-3910993">
        <id>P43629</id>
        <label>KIR3DL1</label>
    </interactant>
    <organismsDiffer>false</organismsDiffer>
    <experiments>3</experiments>
</comment>
<comment type="interaction">
    <interactant intactId="EBI-2811134">
        <id>P30511</id>
    </interactant>
    <interactant intactId="EBI-6165894">
        <id>P43630</id>
        <label>KIR3DL2</label>
    </interactant>
    <organismsDiffer>false</organismsDiffer>
    <experiments>6</experiments>
</comment>
<comment type="interaction">
    <interactant intactId="EBI-2811134">
        <id>P30511</id>
    </interactant>
    <interactant intactId="EBI-15316524">
        <id>Q14943</id>
        <label>KIR3DS1</label>
    </interactant>
    <organismsDiffer>false</organismsDiffer>
    <experiments>6</experiments>
</comment>
<comment type="subcellular location">
    <subcellularLocation>
        <location evidence="11 16 29">Cell membrane</location>
        <topology>Single-pass type I membrane protein</topology>
    </subcellularLocation>
    <subcellularLocation>
        <location evidence="16">Early endosome membrane</location>
    </subcellularLocation>
    <subcellularLocation>
        <location evidence="16">Lysosome membrane</location>
    </subcellularLocation>
    <text evidence="16">For cross-presentation transits from the cell surface through endosomal pathway to lysosomes, where the peptide is generated from internalized exogenous antigen.</text>
</comment>
<comment type="alternative products">
    <event type="alternative splicing"/>
    <isoform>
        <id>P30511-1</id>
        <name>1</name>
        <sequence type="displayed"/>
    </isoform>
    <isoform>
        <id>P30511-2</id>
        <name>2</name>
        <sequence type="described" ref="VSP_038846"/>
    </isoform>
    <isoform>
        <id>P30511-3</id>
        <name>3</name>
        <sequence type="described" ref="VSP_040349"/>
    </isoform>
</comment>
<comment type="tissue specificity">
    <text evidence="4 6 15 18 19">Expressed in resting B cells (at protein level). Expressed in secondary lymphoid organs rich in B and T cells such as the tonsils, spleen, and thymus (at protein level) (PubMed:10605026, PubMed:11169396). Expressed in the endothelial cells of the tonsils (PubMed:11169396). Expressed on activated lymphoid cells including B cells, NK cells, CD4+ T cells and memory T cells (at protein level) (PubMed:20865824, PubMed:27455421). Expressed in motor neurons of spinal cord (PubMed:26928464).</text>
</comment>
<comment type="developmental stage">
    <text evidence="4 20">Expressed in fetal liver (at protein level) (PubMed:10605026). Expressed in placenta villous mesenchyme, cytotrophoblast, syncytiotrophoblast and invasive extravillous trophoblast (at protein level) (PubMed:28185362).</text>
</comment>
<comment type="induction">
    <text evidence="19">Up-regulated in CD4+ T cells upon stimulation via TCR and upon HIV-1 infection.</text>
</comment>
<comment type="PTM">
    <text evidence="4 19">N-glycosylated.</text>
</comment>
<comment type="similarity">
    <text evidence="28">Belongs to the MHC class I family.</text>
</comment>
<comment type="sequence caution" evidence="28">
    <conflict type="erroneous gene model prediction">
        <sequence resource="EMBL-CDS" id="AAC24827"/>
    </conflict>
</comment>
<comment type="sequence caution" evidence="28">
    <conflict type="erroneous initiation">
        <sequence resource="EMBL-CDS" id="AAH09260"/>
    </conflict>
    <text>Extended N-terminus.</text>
</comment>
<comment type="sequence caution" evidence="28">
    <conflict type="erroneous gene model prediction">
        <sequence resource="EMBL-CDS" id="BAB63337"/>
    </conflict>
</comment>
<comment type="sequence caution" evidence="28">
    <conflict type="erroneous gene model prediction">
        <sequence resource="EMBL-CDS" id="CAA34947"/>
    </conflict>
</comment>
<comment type="sequence caution" evidence="28">
    <conflict type="erroneous gene model prediction">
        <sequence resource="EMBL-CDS" id="CAB46623"/>
    </conflict>
</comment>
<sequence>MAPRSLLLLLSGALALTDTWAGSHSLRYFSTAVSRPGRGEPRYIAVEYVDDTQFLRFDSDAAIPRMEPREPWVEQEGPQYWEWTTGYAKANAQTDRVALRNLLRRYNQSEAGSHTLQGMNGCDMGPDGRLLRGYHQHAYDGKDYISLNEDLRSWTAADTVAQITQRFYEAEEYAEEFRTYLEGECLELLRRYLENGKETLQRADPPKAHVAHHPISDHEATLRCWALGFYPAEITLTWQRDGEEQTQDTELVETRPAGDGTFQKWAAVVVPPGEEQRYTCHVQHEGLPQPLILRWEQSPQPTIPIVGIVAGLVVLGAVVTGAVVAAVMWRKKSSDRNRGSYSQAAV</sequence>
<name>HLAF_HUMAN</name>
<dbReference type="EMBL" id="X17093">
    <property type="protein sequence ID" value="CAA34947.1"/>
    <property type="status" value="ALT_SEQ"/>
    <property type="molecule type" value="Genomic_DNA"/>
</dbReference>
<dbReference type="EMBL" id="AF055066">
    <property type="protein sequence ID" value="AAC24827.1"/>
    <property type="status" value="ALT_SEQ"/>
    <property type="molecule type" value="Genomic_DNA"/>
</dbReference>
<dbReference type="EMBL" id="AY253269">
    <property type="protein sequence ID" value="AAO86773.1"/>
    <property type="molecule type" value="mRNA"/>
</dbReference>
<dbReference type="EMBL" id="AY253270">
    <property type="protein sequence ID" value="AAO86774.1"/>
    <property type="molecule type" value="mRNA"/>
</dbReference>
<dbReference type="EMBL" id="AY253271">
    <property type="protein sequence ID" value="AAO86775.1"/>
    <property type="molecule type" value="mRNA"/>
</dbReference>
<dbReference type="EMBL" id="AF523284">
    <property type="protein sequence ID" value="AAM74979.1"/>
    <property type="molecule type" value="Genomic_DNA"/>
</dbReference>
<dbReference type="EMBL" id="AF523285">
    <property type="protein sequence ID" value="AAM74980.1"/>
    <property type="molecule type" value="Genomic_DNA"/>
</dbReference>
<dbReference type="EMBL" id="AF523286">
    <property type="protein sequence ID" value="AAM74981.1"/>
    <property type="molecule type" value="Genomic_DNA"/>
</dbReference>
<dbReference type="EMBL" id="AF523287">
    <property type="protein sequence ID" value="AAM74982.1"/>
    <property type="molecule type" value="Genomic_DNA"/>
</dbReference>
<dbReference type="EMBL" id="AF523288">
    <property type="protein sequence ID" value="AAM74983.1"/>
    <property type="molecule type" value="Genomic_DNA"/>
</dbReference>
<dbReference type="EMBL" id="AF523289">
    <property type="protein sequence ID" value="AAM74984.1"/>
    <property type="molecule type" value="Genomic_DNA"/>
</dbReference>
<dbReference type="EMBL" id="AF523290">
    <property type="protein sequence ID" value="AAM74985.1"/>
    <property type="molecule type" value="Genomic_DNA"/>
</dbReference>
<dbReference type="EMBL" id="AF523291">
    <property type="protein sequence ID" value="AAM74986.1"/>
    <property type="molecule type" value="Genomic_DNA"/>
</dbReference>
<dbReference type="EMBL" id="AF523292">
    <property type="protein sequence ID" value="AAM74987.1"/>
    <property type="molecule type" value="Genomic_DNA"/>
</dbReference>
<dbReference type="EMBL" id="AF523293">
    <property type="protein sequence ID" value="AAM74988.1"/>
    <property type="molecule type" value="Genomic_DNA"/>
</dbReference>
<dbReference type="EMBL" id="AF523294">
    <property type="protein sequence ID" value="AAM74989.1"/>
    <property type="molecule type" value="Genomic_DNA"/>
</dbReference>
<dbReference type="EMBL" id="AF523295">
    <property type="protein sequence ID" value="AAM74990.1"/>
    <property type="molecule type" value="Genomic_DNA"/>
</dbReference>
<dbReference type="EMBL" id="AF523296">
    <property type="protein sequence ID" value="AAM74991.1"/>
    <property type="molecule type" value="Genomic_DNA"/>
</dbReference>
<dbReference type="EMBL" id="AF523297">
    <property type="protein sequence ID" value="AAM74992.1"/>
    <property type="molecule type" value="Genomic_DNA"/>
</dbReference>
<dbReference type="EMBL" id="AY645742">
    <property type="protein sequence ID" value="AAT73225.1"/>
    <property type="molecule type" value="Genomic_DNA"/>
</dbReference>
<dbReference type="EMBL" id="AY645743">
    <property type="protein sequence ID" value="AAT73226.1"/>
    <property type="molecule type" value="Genomic_DNA"/>
</dbReference>
<dbReference type="EMBL" id="AY645744">
    <property type="protein sequence ID" value="AAT73227.1"/>
    <property type="molecule type" value="Genomic_DNA"/>
</dbReference>
<dbReference type="EMBL" id="AY645745">
    <property type="protein sequence ID" value="AAT73228.1"/>
    <property type="molecule type" value="Genomic_DNA"/>
</dbReference>
<dbReference type="EMBL" id="AY645746">
    <property type="protein sequence ID" value="AAT73229.1"/>
    <property type="molecule type" value="Genomic_DNA"/>
</dbReference>
<dbReference type="EMBL" id="AY645748">
    <property type="protein sequence ID" value="AAT73231.1"/>
    <property type="molecule type" value="Genomic_DNA"/>
</dbReference>
<dbReference type="EMBL" id="AY645749">
    <property type="protein sequence ID" value="AAT73232.1"/>
    <property type="molecule type" value="Genomic_DNA"/>
</dbReference>
<dbReference type="EMBL" id="AY645750">
    <property type="protein sequence ID" value="AAT73233.1"/>
    <property type="molecule type" value="Genomic_DNA"/>
</dbReference>
<dbReference type="EMBL" id="AY645751">
    <property type="protein sequence ID" value="AAT73234.1"/>
    <property type="molecule type" value="Genomic_DNA"/>
</dbReference>
<dbReference type="EMBL" id="AY645752">
    <property type="protein sequence ID" value="AAT73235.1"/>
    <property type="molecule type" value="Genomic_DNA"/>
</dbReference>
<dbReference type="EMBL" id="AY645753">
    <property type="protein sequence ID" value="AAT73236.1"/>
    <property type="molecule type" value="Genomic_DNA"/>
</dbReference>
<dbReference type="EMBL" id="AY645754">
    <property type="protein sequence ID" value="AAT73237.1"/>
    <property type="molecule type" value="Genomic_DNA"/>
</dbReference>
<dbReference type="EMBL" id="AY645756">
    <property type="protein sequence ID" value="AAT73239.1"/>
    <property type="molecule type" value="Genomic_DNA"/>
</dbReference>
<dbReference type="EMBL" id="AY645757">
    <property type="protein sequence ID" value="AAT73240.1"/>
    <property type="molecule type" value="Genomic_DNA"/>
</dbReference>
<dbReference type="EMBL" id="AY645758">
    <property type="protein sequence ID" value="AAT73241.1"/>
    <property type="molecule type" value="Genomic_DNA"/>
</dbReference>
<dbReference type="EMBL" id="AY645759">
    <property type="protein sequence ID" value="AAT73242.1"/>
    <property type="molecule type" value="Genomic_DNA"/>
</dbReference>
<dbReference type="EMBL" id="DQ367723">
    <property type="protein sequence ID" value="ABD38924.1"/>
    <property type="molecule type" value="mRNA"/>
</dbReference>
<dbReference type="EMBL" id="BA000025">
    <property type="protein sequence ID" value="BAB63337.1"/>
    <property type="status" value="ALT_SEQ"/>
    <property type="molecule type" value="Genomic_DNA"/>
</dbReference>
<dbReference type="EMBL" id="AL022723">
    <property type="protein sequence ID" value="CAB46623.1"/>
    <property type="status" value="ALT_SEQ"/>
    <property type="molecule type" value="Genomic_DNA"/>
</dbReference>
<dbReference type="EMBL" id="AL645939">
    <property type="status" value="NOT_ANNOTATED_CDS"/>
    <property type="molecule type" value="Genomic_DNA"/>
</dbReference>
<dbReference type="EMBL" id="AL669813">
    <property type="status" value="NOT_ANNOTATED_CDS"/>
    <property type="molecule type" value="Genomic_DNA"/>
</dbReference>
<dbReference type="EMBL" id="AL844851">
    <property type="status" value="NOT_ANNOTATED_CDS"/>
    <property type="molecule type" value="Genomic_DNA"/>
</dbReference>
<dbReference type="EMBL" id="BX005428">
    <property type="status" value="NOT_ANNOTATED_CDS"/>
    <property type="molecule type" value="Genomic_DNA"/>
</dbReference>
<dbReference type="EMBL" id="CR753818">
    <property type="status" value="NOT_ANNOTATED_CDS"/>
    <property type="molecule type" value="Genomic_DNA"/>
</dbReference>
<dbReference type="EMBL" id="BX927250">
    <property type="status" value="NOT_ANNOTATED_CDS"/>
    <property type="molecule type" value="Genomic_DNA"/>
</dbReference>
<dbReference type="EMBL" id="CH471081">
    <property type="protein sequence ID" value="EAX03223.1"/>
    <property type="molecule type" value="Genomic_DNA"/>
</dbReference>
<dbReference type="EMBL" id="CH471081">
    <property type="protein sequence ID" value="EAX03226.1"/>
    <property type="molecule type" value="Genomic_DNA"/>
</dbReference>
<dbReference type="EMBL" id="BC009260">
    <property type="protein sequence ID" value="AAH09260.2"/>
    <property type="status" value="ALT_INIT"/>
    <property type="molecule type" value="mRNA"/>
</dbReference>
<dbReference type="EMBL" id="BC062991">
    <property type="protein sequence ID" value="AAH62991.1"/>
    <property type="molecule type" value="mRNA"/>
</dbReference>
<dbReference type="CCDS" id="CCDS43437.1">
    <molecule id="P30511-3"/>
</dbReference>
<dbReference type="CCDS" id="CCDS43438.1">
    <molecule id="P30511-1"/>
</dbReference>
<dbReference type="CCDS" id="CCDS43439.1">
    <molecule id="P30511-2"/>
</dbReference>
<dbReference type="PIR" id="A60384">
    <property type="entry name" value="A60384"/>
</dbReference>
<dbReference type="RefSeq" id="NP_001091948.1">
    <molecule id="P30511-2"/>
    <property type="nucleotide sequence ID" value="NM_001098478.2"/>
</dbReference>
<dbReference type="RefSeq" id="NP_001091949.1">
    <molecule id="P30511-3"/>
    <property type="nucleotide sequence ID" value="NM_001098479.2"/>
</dbReference>
<dbReference type="RefSeq" id="NP_061823.2">
    <molecule id="P30511-1"/>
    <property type="nucleotide sequence ID" value="NM_018950.3"/>
</dbReference>
<dbReference type="PDB" id="5IUE">
    <property type="method" value="X-ray"/>
    <property type="resolution" value="2.62 A"/>
    <property type="chains" value="A/E/G/I=22-305"/>
</dbReference>
<dbReference type="PDB" id="5KNM">
    <property type="method" value="X-ray"/>
    <property type="resolution" value="3.30 A"/>
    <property type="chains" value="A=22-305"/>
</dbReference>
<dbReference type="PDBsum" id="5IUE"/>
<dbReference type="PDBsum" id="5KNM"/>
<dbReference type="SMR" id="P30511"/>
<dbReference type="BioGRID" id="109379">
    <property type="interactions" value="133"/>
</dbReference>
<dbReference type="FunCoup" id="P30511">
    <property type="interactions" value="807"/>
</dbReference>
<dbReference type="IntAct" id="P30511">
    <property type="interactions" value="86"/>
</dbReference>
<dbReference type="MINT" id="P30511"/>
<dbReference type="STRING" id="9606.ENSP00000259951"/>
<dbReference type="GlyCosmos" id="P30511">
    <property type="glycosylation" value="2 sites, 1 glycan"/>
</dbReference>
<dbReference type="GlyGen" id="P30511">
    <property type="glycosylation" value="2 sites, 7 N-linked glycans (1 site), 1 O-linked glycan (1 site)"/>
</dbReference>
<dbReference type="iPTMnet" id="P30511"/>
<dbReference type="PhosphoSitePlus" id="P30511"/>
<dbReference type="BioMuta" id="HLA-F"/>
<dbReference type="DMDM" id="317373438"/>
<dbReference type="jPOST" id="P30511"/>
<dbReference type="MassIVE" id="P30511"/>
<dbReference type="PaxDb" id="9606-ENSP00000259951"/>
<dbReference type="PeptideAtlas" id="P30511"/>
<dbReference type="ProteomicsDB" id="54704">
    <molecule id="P30511-1"/>
</dbReference>
<dbReference type="ProteomicsDB" id="54705">
    <molecule id="P30511-2"/>
</dbReference>
<dbReference type="ProteomicsDB" id="54706">
    <molecule id="P30511-3"/>
</dbReference>
<dbReference type="Pumba" id="P30511"/>
<dbReference type="Antibodypedia" id="26089">
    <property type="antibodies" value="195 antibodies from 27 providers"/>
</dbReference>
<dbReference type="DNASU" id="3134"/>
<dbReference type="Ensembl" id="ENST00000259951.12">
    <molecule id="P30511-3"/>
    <property type="protein sequence ID" value="ENSP00000259951.6"/>
    <property type="gene ID" value="ENSG00000204642.14"/>
</dbReference>
<dbReference type="Ensembl" id="ENST00000334668.8">
    <molecule id="P30511-1"/>
    <property type="protein sequence ID" value="ENSP00000334263.4"/>
    <property type="gene ID" value="ENSG00000204642.14"/>
</dbReference>
<dbReference type="Ensembl" id="ENST00000359076.7">
    <molecule id="P30511-2"/>
    <property type="protein sequence ID" value="ENSP00000351977.3"/>
    <property type="gene ID" value="ENSG00000206509.13"/>
</dbReference>
<dbReference type="Ensembl" id="ENST00000376848.8">
    <molecule id="P30511-2"/>
    <property type="protein sequence ID" value="ENSP00000366044.4"/>
    <property type="gene ID" value="ENSG00000229698.11"/>
</dbReference>
<dbReference type="Ensembl" id="ENST00000376861.5">
    <molecule id="P30511-1"/>
    <property type="protein sequence ID" value="ENSP00000366057.1"/>
    <property type="gene ID" value="ENSG00000204642.14"/>
</dbReference>
<dbReference type="Ensembl" id="ENST00000383515.6">
    <molecule id="P30511-2"/>
    <property type="protein sequence ID" value="ENSP00000373007.2"/>
    <property type="gene ID" value="ENSG00000137403.19"/>
</dbReference>
<dbReference type="Ensembl" id="ENST00000420067.5">
    <molecule id="P30511-2"/>
    <property type="protein sequence ID" value="ENSP00000393535.1"/>
    <property type="gene ID" value="ENSG00000235220.10"/>
</dbReference>
<dbReference type="Ensembl" id="ENST00000434407.6">
    <molecule id="P30511-2"/>
    <property type="protein sequence ID" value="ENSP00000397376.2"/>
    <property type="gene ID" value="ENSG00000204642.14"/>
</dbReference>
<dbReference type="Ensembl" id="ENST00000440590.5">
    <molecule id="P30511-2"/>
    <property type="protein sequence ID" value="ENSP00000399835.1"/>
    <property type="gene ID" value="ENSG00000237508.10"/>
</dbReference>
<dbReference type="GeneID" id="3134"/>
<dbReference type="KEGG" id="hsa:3134"/>
<dbReference type="MANE-Select" id="ENST00000259951.12">
    <molecule id="P30511-3"/>
    <property type="protein sequence ID" value="ENSP00000259951.6"/>
    <property type="RefSeq nucleotide sequence ID" value="NM_001098479.2"/>
    <property type="RefSeq protein sequence ID" value="NP_001091949.1"/>
</dbReference>
<dbReference type="UCSC" id="uc003nnm.5">
    <molecule id="P30511-1"/>
    <property type="organism name" value="human"/>
</dbReference>
<dbReference type="AGR" id="HGNC:4963"/>
<dbReference type="CTD" id="3134"/>
<dbReference type="DisGeNET" id="3134"/>
<dbReference type="GeneCards" id="HLA-F"/>
<dbReference type="HGNC" id="HGNC:4963">
    <property type="gene designation" value="HLA-F"/>
</dbReference>
<dbReference type="HPA" id="ENSG00000204642">
    <property type="expression patterns" value="Tissue enhanced (lymphoid)"/>
</dbReference>
<dbReference type="MIM" id="143110">
    <property type="type" value="gene"/>
</dbReference>
<dbReference type="neXtProt" id="NX_P30511"/>
<dbReference type="OpenTargets" id="ENSG00000204642"/>
<dbReference type="PharmGKB" id="PA35082"/>
<dbReference type="VEuPathDB" id="HostDB:ENSG00000204642"/>
<dbReference type="eggNOG" id="ENOG502RQEK">
    <property type="taxonomic scope" value="Eukaryota"/>
</dbReference>
<dbReference type="GeneTree" id="ENSGT01120000271826"/>
<dbReference type="HOGENOM" id="CLU_047501_1_1_1"/>
<dbReference type="InParanoid" id="P30511"/>
<dbReference type="OMA" id="FVRYNSE"/>
<dbReference type="OrthoDB" id="9482151at2759"/>
<dbReference type="PAN-GO" id="P30511">
    <property type="GO annotations" value="8 GO annotations based on evolutionary models"/>
</dbReference>
<dbReference type="PhylomeDB" id="P30511"/>
<dbReference type="TreeFam" id="TF336617"/>
<dbReference type="PathwayCommons" id="P30511"/>
<dbReference type="Reactome" id="R-HSA-1236974">
    <property type="pathway name" value="ER-Phagosome pathway"/>
</dbReference>
<dbReference type="Reactome" id="R-HSA-1236977">
    <property type="pathway name" value="Endosomal/Vacuolar pathway"/>
</dbReference>
<dbReference type="Reactome" id="R-HSA-198933">
    <property type="pathway name" value="Immunoregulatory interactions between a Lymphoid and a non-Lymphoid cell"/>
</dbReference>
<dbReference type="Reactome" id="R-HSA-877300">
    <property type="pathway name" value="Interferon gamma signaling"/>
</dbReference>
<dbReference type="Reactome" id="R-HSA-909733">
    <property type="pathway name" value="Interferon alpha/beta signaling"/>
</dbReference>
<dbReference type="Reactome" id="R-HSA-9705671">
    <property type="pathway name" value="SARS-CoV-2 activates/modulates innate and adaptive immune responses"/>
</dbReference>
<dbReference type="Reactome" id="R-HSA-983170">
    <property type="pathway name" value="Antigen Presentation: Folding, assembly and peptide loading of class I MHC"/>
</dbReference>
<dbReference type="SignaLink" id="P30511"/>
<dbReference type="SIGNOR" id="P30511"/>
<dbReference type="BioGRID-ORCS" id="3134">
    <property type="hits" value="13 hits in 1142 CRISPR screens"/>
</dbReference>
<dbReference type="ChiTaRS" id="HLA-F">
    <property type="organism name" value="human"/>
</dbReference>
<dbReference type="GeneWiki" id="HLA-F"/>
<dbReference type="GenomeRNAi" id="3134"/>
<dbReference type="Pharos" id="P30511">
    <property type="development level" value="Tbio"/>
</dbReference>
<dbReference type="PRO" id="PR:P30511"/>
<dbReference type="Proteomes" id="UP000005640">
    <property type="component" value="Chromosome 6"/>
</dbReference>
<dbReference type="RNAct" id="P30511">
    <property type="molecule type" value="protein"/>
</dbReference>
<dbReference type="Bgee" id="ENSG00000204642">
    <property type="expression patterns" value="Expressed in granulocyte and 97 other cell types or tissues"/>
</dbReference>
<dbReference type="ExpressionAtlas" id="P30511">
    <property type="expression patterns" value="baseline and differential"/>
</dbReference>
<dbReference type="GO" id="GO:0009986">
    <property type="term" value="C:cell surface"/>
    <property type="evidence" value="ECO:0000314"/>
    <property type="project" value="UniProtKB"/>
</dbReference>
<dbReference type="GO" id="GO:0031901">
    <property type="term" value="C:early endosome membrane"/>
    <property type="evidence" value="ECO:0000314"/>
    <property type="project" value="UniProtKB"/>
</dbReference>
<dbReference type="GO" id="GO:0005783">
    <property type="term" value="C:endoplasmic reticulum"/>
    <property type="evidence" value="ECO:0000314"/>
    <property type="project" value="UniProtKB"/>
</dbReference>
<dbReference type="GO" id="GO:0012507">
    <property type="term" value="C:ER to Golgi transport vesicle membrane"/>
    <property type="evidence" value="ECO:0000304"/>
    <property type="project" value="Reactome"/>
</dbReference>
<dbReference type="GO" id="GO:0009897">
    <property type="term" value="C:external side of plasma membrane"/>
    <property type="evidence" value="ECO:0000318"/>
    <property type="project" value="GO_Central"/>
</dbReference>
<dbReference type="GO" id="GO:0005615">
    <property type="term" value="C:extracellular space"/>
    <property type="evidence" value="ECO:0000318"/>
    <property type="project" value="GO_Central"/>
</dbReference>
<dbReference type="GO" id="GO:0000139">
    <property type="term" value="C:Golgi membrane"/>
    <property type="evidence" value="ECO:0000314"/>
    <property type="project" value="UniProtKB"/>
</dbReference>
<dbReference type="GO" id="GO:0098553">
    <property type="term" value="C:lumenal side of endoplasmic reticulum membrane"/>
    <property type="evidence" value="ECO:0000304"/>
    <property type="project" value="Reactome"/>
</dbReference>
<dbReference type="GO" id="GO:0005765">
    <property type="term" value="C:lysosomal membrane"/>
    <property type="evidence" value="ECO:0000314"/>
    <property type="project" value="UniProtKB"/>
</dbReference>
<dbReference type="GO" id="GO:0016020">
    <property type="term" value="C:membrane"/>
    <property type="evidence" value="ECO:0007005"/>
    <property type="project" value="UniProtKB"/>
</dbReference>
<dbReference type="GO" id="GO:0042612">
    <property type="term" value="C:MHC class I protein complex"/>
    <property type="evidence" value="ECO:0007669"/>
    <property type="project" value="UniProtKB-KW"/>
</dbReference>
<dbReference type="GO" id="GO:0032398">
    <property type="term" value="C:MHC class Ib protein complex"/>
    <property type="evidence" value="ECO:0000314"/>
    <property type="project" value="UniProtKB"/>
</dbReference>
<dbReference type="GO" id="GO:0030670">
    <property type="term" value="C:phagocytic vesicle membrane"/>
    <property type="evidence" value="ECO:0000304"/>
    <property type="project" value="Reactome"/>
</dbReference>
<dbReference type="GO" id="GO:0005886">
    <property type="term" value="C:plasma membrane"/>
    <property type="evidence" value="ECO:0000314"/>
    <property type="project" value="UniProtKB"/>
</dbReference>
<dbReference type="GO" id="GO:0055038">
    <property type="term" value="C:recycling endosome membrane"/>
    <property type="evidence" value="ECO:0000304"/>
    <property type="project" value="Reactome"/>
</dbReference>
<dbReference type="GO" id="GO:0071889">
    <property type="term" value="F:14-3-3 protein binding"/>
    <property type="evidence" value="ECO:0000314"/>
    <property type="project" value="UniProtKB"/>
</dbReference>
<dbReference type="GO" id="GO:0030881">
    <property type="term" value="F:beta-2-microglobulin binding"/>
    <property type="evidence" value="ECO:0000314"/>
    <property type="project" value="UniProtKB"/>
</dbReference>
<dbReference type="GO" id="GO:0042605">
    <property type="term" value="F:peptide antigen binding"/>
    <property type="evidence" value="ECO:0000314"/>
    <property type="project" value="UniProtKB"/>
</dbReference>
<dbReference type="GO" id="GO:0005102">
    <property type="term" value="F:signaling receptor binding"/>
    <property type="evidence" value="ECO:0000318"/>
    <property type="project" value="GO_Central"/>
</dbReference>
<dbReference type="GO" id="GO:0046978">
    <property type="term" value="F:TAP1 binding"/>
    <property type="evidence" value="ECO:0000353"/>
    <property type="project" value="UniProtKB"/>
</dbReference>
<dbReference type="GO" id="GO:0046979">
    <property type="term" value="F:TAP2 binding"/>
    <property type="evidence" value="ECO:0000353"/>
    <property type="project" value="UniProtKB"/>
</dbReference>
<dbReference type="GO" id="GO:0002486">
    <property type="term" value="P:antigen processing and presentation of endogenous peptide antigen via MHC class I via ER pathway, TAP-independent"/>
    <property type="evidence" value="ECO:0000318"/>
    <property type="project" value="GO_Central"/>
</dbReference>
<dbReference type="GO" id="GO:0002476">
    <property type="term" value="P:antigen processing and presentation of endogenous peptide antigen via MHC class Ib"/>
    <property type="evidence" value="ECO:0000314"/>
    <property type="project" value="UniProtKB"/>
</dbReference>
<dbReference type="GO" id="GO:0002477">
    <property type="term" value="P:antigen processing and presentation of exogenous peptide antigen via MHC class Ib"/>
    <property type="evidence" value="ECO:0000314"/>
    <property type="project" value="UniProtKB"/>
</dbReference>
<dbReference type="GO" id="GO:0006955">
    <property type="term" value="P:immune response"/>
    <property type="evidence" value="ECO:0000318"/>
    <property type="project" value="GO_Central"/>
</dbReference>
<dbReference type="GO" id="GO:0002728">
    <property type="term" value="P:negative regulation of natural killer cell cytokine production"/>
    <property type="evidence" value="ECO:0000314"/>
    <property type="project" value="UniProtKB"/>
</dbReference>
<dbReference type="GO" id="GO:0043322">
    <property type="term" value="P:negative regulation of natural killer cell degranulation"/>
    <property type="evidence" value="ECO:0000314"/>
    <property type="project" value="UniProtKB"/>
</dbReference>
<dbReference type="GO" id="GO:0045953">
    <property type="term" value="P:negative regulation of natural killer cell mediated cytotoxicity"/>
    <property type="evidence" value="ECO:0000314"/>
    <property type="project" value="UniProtKB"/>
</dbReference>
<dbReference type="GO" id="GO:0002725">
    <property type="term" value="P:negative regulation of T cell cytokine production"/>
    <property type="evidence" value="ECO:0000314"/>
    <property type="project" value="UniProtKB"/>
</dbReference>
<dbReference type="GO" id="GO:0002729">
    <property type="term" value="P:positive regulation of natural killer cell cytokine production"/>
    <property type="evidence" value="ECO:0000314"/>
    <property type="project" value="UniProtKB"/>
</dbReference>
<dbReference type="GO" id="GO:0043323">
    <property type="term" value="P:positive regulation of natural killer cell degranulation"/>
    <property type="evidence" value="ECO:0000314"/>
    <property type="project" value="UniProtKB"/>
</dbReference>
<dbReference type="GO" id="GO:0001916">
    <property type="term" value="P:positive regulation of T cell mediated cytotoxicity"/>
    <property type="evidence" value="ECO:0000315"/>
    <property type="project" value="UniProtKB"/>
</dbReference>
<dbReference type="CDD" id="cd21023">
    <property type="entry name" value="IgC1_MHC_Ia_HLA-F"/>
    <property type="match status" value="1"/>
</dbReference>
<dbReference type="FunFam" id="2.60.40.10:FF:000014">
    <property type="entry name" value="H-2 class I histocompatibility antigen, alpha chain"/>
    <property type="match status" value="1"/>
</dbReference>
<dbReference type="FunFam" id="3.30.500.10:FF:000001">
    <property type="entry name" value="H-2 class I histocompatibility antigen, alpha chain"/>
    <property type="match status" value="1"/>
</dbReference>
<dbReference type="Gene3D" id="2.60.40.10">
    <property type="entry name" value="Immunoglobulins"/>
    <property type="match status" value="1"/>
</dbReference>
<dbReference type="Gene3D" id="3.30.500.10">
    <property type="entry name" value="MHC class I-like antigen recognition-like"/>
    <property type="match status" value="1"/>
</dbReference>
<dbReference type="InterPro" id="IPR007110">
    <property type="entry name" value="Ig-like_dom"/>
</dbReference>
<dbReference type="InterPro" id="IPR036179">
    <property type="entry name" value="Ig-like_dom_sf"/>
</dbReference>
<dbReference type="InterPro" id="IPR013783">
    <property type="entry name" value="Ig-like_fold"/>
</dbReference>
<dbReference type="InterPro" id="IPR003006">
    <property type="entry name" value="Ig/MHC_CS"/>
</dbReference>
<dbReference type="InterPro" id="IPR003597">
    <property type="entry name" value="Ig_C1-set"/>
</dbReference>
<dbReference type="InterPro" id="IPR050208">
    <property type="entry name" value="MHC_class-I_related"/>
</dbReference>
<dbReference type="InterPro" id="IPR011161">
    <property type="entry name" value="MHC_I-like_Ag-recog"/>
</dbReference>
<dbReference type="InterPro" id="IPR037055">
    <property type="entry name" value="MHC_I-like_Ag-recog_sf"/>
</dbReference>
<dbReference type="InterPro" id="IPR011162">
    <property type="entry name" value="MHC_I/II-like_Ag-recog"/>
</dbReference>
<dbReference type="InterPro" id="IPR001039">
    <property type="entry name" value="MHC_I_a_a1/a2"/>
</dbReference>
<dbReference type="PANTHER" id="PTHR16675:SF187">
    <property type="entry name" value="HLA CLASS I HISTOCOMPATIBILITY ANTIGEN, ALPHA CHAIN F"/>
    <property type="match status" value="1"/>
</dbReference>
<dbReference type="PANTHER" id="PTHR16675">
    <property type="entry name" value="MHC CLASS I-RELATED"/>
    <property type="match status" value="1"/>
</dbReference>
<dbReference type="Pfam" id="PF07654">
    <property type="entry name" value="C1-set"/>
    <property type="match status" value="1"/>
</dbReference>
<dbReference type="Pfam" id="PF00129">
    <property type="entry name" value="MHC_I"/>
    <property type="match status" value="1"/>
</dbReference>
<dbReference type="PRINTS" id="PR01638">
    <property type="entry name" value="MHCCLASSI"/>
</dbReference>
<dbReference type="SMART" id="SM00407">
    <property type="entry name" value="IGc1"/>
    <property type="match status" value="1"/>
</dbReference>
<dbReference type="SUPFAM" id="SSF48726">
    <property type="entry name" value="Immunoglobulin"/>
    <property type="match status" value="1"/>
</dbReference>
<dbReference type="SUPFAM" id="SSF54452">
    <property type="entry name" value="MHC antigen-recognition domain"/>
    <property type="match status" value="1"/>
</dbReference>
<dbReference type="PROSITE" id="PS50835">
    <property type="entry name" value="IG_LIKE"/>
    <property type="match status" value="1"/>
</dbReference>
<dbReference type="PROSITE" id="PS00290">
    <property type="entry name" value="IG_MHC"/>
    <property type="match status" value="1"/>
</dbReference>